<keyword id="KW-0496">Mitochondrion</keyword>
<keyword id="KW-1185">Reference proteome</keyword>
<keyword id="KW-0687">Ribonucleoprotein</keyword>
<keyword id="KW-0689">Ribosomal protein</keyword>
<keyword id="KW-0809">Transit peptide</keyword>
<reference key="1">
    <citation type="journal article" date="2002" name="Nature">
        <title>The genome sequence of Schizosaccharomyces pombe.</title>
        <authorList>
            <person name="Wood V."/>
            <person name="Gwilliam R."/>
            <person name="Rajandream M.A."/>
            <person name="Lyne M.H."/>
            <person name="Lyne R."/>
            <person name="Stewart A."/>
            <person name="Sgouros J.G."/>
            <person name="Peat N."/>
            <person name="Hayles J."/>
            <person name="Baker S.G."/>
            <person name="Basham D."/>
            <person name="Bowman S."/>
            <person name="Brooks K."/>
            <person name="Brown D."/>
            <person name="Brown S."/>
            <person name="Chillingworth T."/>
            <person name="Churcher C.M."/>
            <person name="Collins M."/>
            <person name="Connor R."/>
            <person name="Cronin A."/>
            <person name="Davis P."/>
            <person name="Feltwell T."/>
            <person name="Fraser A."/>
            <person name="Gentles S."/>
            <person name="Goble A."/>
            <person name="Hamlin N."/>
            <person name="Harris D.E."/>
            <person name="Hidalgo J."/>
            <person name="Hodgson G."/>
            <person name="Holroyd S."/>
            <person name="Hornsby T."/>
            <person name="Howarth S."/>
            <person name="Huckle E.J."/>
            <person name="Hunt S."/>
            <person name="Jagels K."/>
            <person name="James K.D."/>
            <person name="Jones L."/>
            <person name="Jones M."/>
            <person name="Leather S."/>
            <person name="McDonald S."/>
            <person name="McLean J."/>
            <person name="Mooney P."/>
            <person name="Moule S."/>
            <person name="Mungall K.L."/>
            <person name="Murphy L.D."/>
            <person name="Niblett D."/>
            <person name="Odell C."/>
            <person name="Oliver K."/>
            <person name="O'Neil S."/>
            <person name="Pearson D."/>
            <person name="Quail M.A."/>
            <person name="Rabbinowitsch E."/>
            <person name="Rutherford K.M."/>
            <person name="Rutter S."/>
            <person name="Saunders D."/>
            <person name="Seeger K."/>
            <person name="Sharp S."/>
            <person name="Skelton J."/>
            <person name="Simmonds M.N."/>
            <person name="Squares R."/>
            <person name="Squares S."/>
            <person name="Stevens K."/>
            <person name="Taylor K."/>
            <person name="Taylor R.G."/>
            <person name="Tivey A."/>
            <person name="Walsh S.V."/>
            <person name="Warren T."/>
            <person name="Whitehead S."/>
            <person name="Woodward J.R."/>
            <person name="Volckaert G."/>
            <person name="Aert R."/>
            <person name="Robben J."/>
            <person name="Grymonprez B."/>
            <person name="Weltjens I."/>
            <person name="Vanstreels E."/>
            <person name="Rieger M."/>
            <person name="Schaefer M."/>
            <person name="Mueller-Auer S."/>
            <person name="Gabel C."/>
            <person name="Fuchs M."/>
            <person name="Duesterhoeft A."/>
            <person name="Fritzc C."/>
            <person name="Holzer E."/>
            <person name="Moestl D."/>
            <person name="Hilbert H."/>
            <person name="Borzym K."/>
            <person name="Langer I."/>
            <person name="Beck A."/>
            <person name="Lehrach H."/>
            <person name="Reinhardt R."/>
            <person name="Pohl T.M."/>
            <person name="Eger P."/>
            <person name="Zimmermann W."/>
            <person name="Wedler H."/>
            <person name="Wambutt R."/>
            <person name="Purnelle B."/>
            <person name="Goffeau A."/>
            <person name="Cadieu E."/>
            <person name="Dreano S."/>
            <person name="Gloux S."/>
            <person name="Lelaure V."/>
            <person name="Mottier S."/>
            <person name="Galibert F."/>
            <person name="Aves S.J."/>
            <person name="Xiang Z."/>
            <person name="Hunt C."/>
            <person name="Moore K."/>
            <person name="Hurst S.M."/>
            <person name="Lucas M."/>
            <person name="Rochet M."/>
            <person name="Gaillardin C."/>
            <person name="Tallada V.A."/>
            <person name="Garzon A."/>
            <person name="Thode G."/>
            <person name="Daga R.R."/>
            <person name="Cruzado L."/>
            <person name="Jimenez J."/>
            <person name="Sanchez M."/>
            <person name="del Rey F."/>
            <person name="Benito J."/>
            <person name="Dominguez A."/>
            <person name="Revuelta J.L."/>
            <person name="Moreno S."/>
            <person name="Armstrong J."/>
            <person name="Forsburg S.L."/>
            <person name="Cerutti L."/>
            <person name="Lowe T."/>
            <person name="McCombie W.R."/>
            <person name="Paulsen I."/>
            <person name="Potashkin J."/>
            <person name="Shpakovski G.V."/>
            <person name="Ussery D."/>
            <person name="Barrell B.G."/>
            <person name="Nurse P."/>
        </authorList>
    </citation>
    <scope>NUCLEOTIDE SEQUENCE [LARGE SCALE GENOMIC DNA]</scope>
    <source>
        <strain>972 / ATCC 24843</strain>
    </source>
</reference>
<reference key="2">
    <citation type="journal article" date="2011" name="Science">
        <title>Comparative functional genomics of the fission yeasts.</title>
        <authorList>
            <person name="Rhind N."/>
            <person name="Chen Z."/>
            <person name="Yassour M."/>
            <person name="Thompson D.A."/>
            <person name="Haas B.J."/>
            <person name="Habib N."/>
            <person name="Wapinski I."/>
            <person name="Roy S."/>
            <person name="Lin M.F."/>
            <person name="Heiman D.I."/>
            <person name="Young S.K."/>
            <person name="Furuya K."/>
            <person name="Guo Y."/>
            <person name="Pidoux A."/>
            <person name="Chen H.M."/>
            <person name="Robbertse B."/>
            <person name="Goldberg J.M."/>
            <person name="Aoki K."/>
            <person name="Bayne E.H."/>
            <person name="Berlin A.M."/>
            <person name="Desjardins C.A."/>
            <person name="Dobbs E."/>
            <person name="Dukaj L."/>
            <person name="Fan L."/>
            <person name="FitzGerald M.G."/>
            <person name="French C."/>
            <person name="Gujja S."/>
            <person name="Hansen K."/>
            <person name="Keifenheim D."/>
            <person name="Levin J.Z."/>
            <person name="Mosher R.A."/>
            <person name="Mueller C.A."/>
            <person name="Pfiffner J."/>
            <person name="Priest M."/>
            <person name="Russ C."/>
            <person name="Smialowska A."/>
            <person name="Swoboda P."/>
            <person name="Sykes S.M."/>
            <person name="Vaughn M."/>
            <person name="Vengrova S."/>
            <person name="Yoder R."/>
            <person name="Zeng Q."/>
            <person name="Allshire R."/>
            <person name="Baulcombe D."/>
            <person name="Birren B.W."/>
            <person name="Brown W."/>
            <person name="Ekwall K."/>
            <person name="Kellis M."/>
            <person name="Leatherwood J."/>
            <person name="Levin H."/>
            <person name="Margalit H."/>
            <person name="Martienssen R."/>
            <person name="Nieduszynski C.A."/>
            <person name="Spatafora J.W."/>
            <person name="Friedman N."/>
            <person name="Dalgaard J.Z."/>
            <person name="Baumann P."/>
            <person name="Niki H."/>
            <person name="Regev A."/>
            <person name="Nusbaum C."/>
        </authorList>
    </citation>
    <scope>REVISION OF GENE MODEL</scope>
</reference>
<reference key="3">
    <citation type="journal article" date="2006" name="Nat. Biotechnol.">
        <title>ORFeome cloning and global analysis of protein localization in the fission yeast Schizosaccharomyces pombe.</title>
        <authorList>
            <person name="Matsuyama A."/>
            <person name="Arai R."/>
            <person name="Yashiroda Y."/>
            <person name="Shirai A."/>
            <person name="Kamata A."/>
            <person name="Sekido S."/>
            <person name="Kobayashi Y."/>
            <person name="Hashimoto A."/>
            <person name="Hamamoto M."/>
            <person name="Hiraoka Y."/>
            <person name="Horinouchi S."/>
            <person name="Yoshida M."/>
        </authorList>
    </citation>
    <scope>SUBCELLULAR LOCATION [LARGE SCALE ANALYSIS]</scope>
</reference>
<feature type="transit peptide" description="Mitochondrion" evidence="2">
    <location>
        <begin position="1"/>
        <end position="17"/>
    </location>
</feature>
<feature type="chain" id="PRO_0000352848" description="Small ribosomal subunit protein uS10m">
    <location>
        <begin position="18"/>
        <end position="228"/>
    </location>
</feature>
<proteinExistence type="inferred from homology"/>
<evidence type="ECO:0000250" key="1">
    <source>
        <dbReference type="UniProtKB" id="Q03201"/>
    </source>
</evidence>
<evidence type="ECO:0000255" key="2"/>
<evidence type="ECO:0000269" key="3">
    <source>
    </source>
</evidence>
<evidence type="ECO:0000305" key="4"/>
<comment type="function">
    <text evidence="1">Component of the mitochondrial ribosome (mitoribosome), a dedicated translation machinery responsible for the synthesis of mitochondrial genome-encoded proteins, including at least some of the essential transmembrane subunits of the mitochondrial respiratory chain. The mitoribosomes are attached to the mitochondrial inner membrane and translation products are cotranslationally integrated into the membrane.</text>
</comment>
<comment type="subunit">
    <text evidence="1">Component of the mitochondrial small ribosomal subunit (mt-SSU). Mature yeast 74S mitochondrial ribosomes consist of a small (37S) and a large (54S) subunit. The 37S small subunit contains a 15S ribosomal RNA (15S mt-rRNA) and at least 32 different proteins. The 54S large subunit contains a 21S rRNA (21S mt-rRNA) and at least 45 different proteins.</text>
</comment>
<comment type="subcellular location">
    <subcellularLocation>
        <location evidence="3">Mitochondrion</location>
    </subcellularLocation>
</comment>
<comment type="similarity">
    <text evidence="4">Belongs to the universal ribosomal protein uS10 family.</text>
</comment>
<name>RT10_SCHPO</name>
<sequence>MKRYMFGTLPRVQPKRCFQTAIGKESPKGNSEKDQLFENPFFQQLPSNVAAVYLNPVKFNPSENDVLCASLKIKSFETPKLDTFTDFICRTAYYMKIPIKGPRPLPNKVESWTLLRSPFIHKSSQENFERITHSRLIQLYSVNPVTLETFFSYLRKCNMWDLKLQAKAYEYESIDDALKNFESQSKSTDNFKELLNGPSKKDIITQNAEKLLRNDPIYKDLLKNSSRK</sequence>
<dbReference type="EMBL" id="CU329671">
    <property type="protein sequence ID" value="CAA18879.3"/>
    <property type="molecule type" value="Genomic_DNA"/>
</dbReference>
<dbReference type="RefSeq" id="NP_596611.3">
    <property type="nucleotide sequence ID" value="NM_001022532.2"/>
</dbReference>
<dbReference type="SMR" id="O60186"/>
<dbReference type="BioGRID" id="277066">
    <property type="interactions" value="1"/>
</dbReference>
<dbReference type="ComplexPortal" id="CPX-10315">
    <property type="entry name" value="37S mitochondrial small ribosomal subunit"/>
</dbReference>
<dbReference type="FunCoup" id="O60186">
    <property type="interactions" value="211"/>
</dbReference>
<dbReference type="STRING" id="284812.O60186"/>
<dbReference type="iPTMnet" id="O60186"/>
<dbReference type="PaxDb" id="4896-SPBC211.01.1"/>
<dbReference type="EnsemblFungi" id="SPBC211.01.1">
    <property type="protein sequence ID" value="SPBC211.01.1:pep"/>
    <property type="gene ID" value="SPBC211.01"/>
</dbReference>
<dbReference type="GeneID" id="2540539"/>
<dbReference type="KEGG" id="spo:2540539"/>
<dbReference type="PomBase" id="SPBC211.01">
    <property type="gene designation" value="rsm10"/>
</dbReference>
<dbReference type="VEuPathDB" id="FungiDB:SPBC211.01"/>
<dbReference type="eggNOG" id="KOG3321">
    <property type="taxonomic scope" value="Eukaryota"/>
</dbReference>
<dbReference type="HOGENOM" id="CLU_051208_4_0_1"/>
<dbReference type="InParanoid" id="O60186"/>
<dbReference type="OMA" id="KVESWTL"/>
<dbReference type="PRO" id="PR:O60186"/>
<dbReference type="Proteomes" id="UP000002485">
    <property type="component" value="Chromosome II"/>
</dbReference>
<dbReference type="GO" id="GO:0005763">
    <property type="term" value="C:mitochondrial small ribosomal subunit"/>
    <property type="evidence" value="ECO:0000250"/>
    <property type="project" value="PomBase"/>
</dbReference>
<dbReference type="GO" id="GO:0005739">
    <property type="term" value="C:mitochondrion"/>
    <property type="evidence" value="ECO:0007005"/>
    <property type="project" value="PomBase"/>
</dbReference>
<dbReference type="GO" id="GO:0015935">
    <property type="term" value="C:small ribosomal subunit"/>
    <property type="evidence" value="ECO:0000318"/>
    <property type="project" value="GO_Central"/>
</dbReference>
<dbReference type="GO" id="GO:0003735">
    <property type="term" value="F:structural constituent of ribosome"/>
    <property type="evidence" value="ECO:0000318"/>
    <property type="project" value="GO_Central"/>
</dbReference>
<dbReference type="GO" id="GO:0032543">
    <property type="term" value="P:mitochondrial translation"/>
    <property type="evidence" value="ECO:0000250"/>
    <property type="project" value="PomBase"/>
</dbReference>
<dbReference type="FunFam" id="3.30.70.600:FF:000003">
    <property type="entry name" value="30S ribosomal protein S10"/>
    <property type="match status" value="1"/>
</dbReference>
<dbReference type="Gene3D" id="3.30.70.600">
    <property type="entry name" value="Ribosomal protein S10 domain"/>
    <property type="match status" value="1"/>
</dbReference>
<dbReference type="HAMAP" id="MF_00508">
    <property type="entry name" value="Ribosomal_uS10"/>
    <property type="match status" value="1"/>
</dbReference>
<dbReference type="InterPro" id="IPR001848">
    <property type="entry name" value="Ribosomal_uS10"/>
</dbReference>
<dbReference type="InterPro" id="IPR027486">
    <property type="entry name" value="Ribosomal_uS10_dom"/>
</dbReference>
<dbReference type="InterPro" id="IPR036838">
    <property type="entry name" value="Ribosomal_uS10_dom_sf"/>
</dbReference>
<dbReference type="NCBIfam" id="TIGR01049">
    <property type="entry name" value="rpsJ_bact"/>
    <property type="match status" value="1"/>
</dbReference>
<dbReference type="PANTHER" id="PTHR11700">
    <property type="entry name" value="30S RIBOSOMAL PROTEIN S10 FAMILY MEMBER"/>
    <property type="match status" value="1"/>
</dbReference>
<dbReference type="Pfam" id="PF00338">
    <property type="entry name" value="Ribosomal_S10"/>
    <property type="match status" value="1"/>
</dbReference>
<dbReference type="PRINTS" id="PR00971">
    <property type="entry name" value="RIBOSOMALS10"/>
</dbReference>
<dbReference type="SMART" id="SM01403">
    <property type="entry name" value="Ribosomal_S10"/>
    <property type="match status" value="1"/>
</dbReference>
<dbReference type="SUPFAM" id="SSF54999">
    <property type="entry name" value="Ribosomal protein S10"/>
    <property type="match status" value="1"/>
</dbReference>
<gene>
    <name type="primary">rsm10</name>
    <name type="ORF">SPBC211.01</name>
    <name type="ORF">SPBC23E6.11</name>
</gene>
<organism>
    <name type="scientific">Schizosaccharomyces pombe (strain 972 / ATCC 24843)</name>
    <name type="common">Fission yeast</name>
    <dbReference type="NCBI Taxonomy" id="284812"/>
    <lineage>
        <taxon>Eukaryota</taxon>
        <taxon>Fungi</taxon>
        <taxon>Dikarya</taxon>
        <taxon>Ascomycota</taxon>
        <taxon>Taphrinomycotina</taxon>
        <taxon>Schizosaccharomycetes</taxon>
        <taxon>Schizosaccharomycetales</taxon>
        <taxon>Schizosaccharomycetaceae</taxon>
        <taxon>Schizosaccharomyces</taxon>
    </lineage>
</organism>
<protein>
    <recommendedName>
        <fullName evidence="4">Small ribosomal subunit protein uS10m</fullName>
    </recommendedName>
    <alternativeName>
        <fullName>37S ribosomal protein S10, mitochondrial</fullName>
    </alternativeName>
</protein>
<accession>O60186</accession>